<name>SSUD_METC4</name>
<gene>
    <name evidence="1" type="primary">ssuD</name>
    <name type="ordered locus">Mchl_3717</name>
</gene>
<accession>B7KX11</accession>
<feature type="chain" id="PRO_1000164970" description="Alkanesulfonate monooxygenase">
    <location>
        <begin position="1"/>
        <end position="391"/>
    </location>
</feature>
<organism>
    <name type="scientific">Methylorubrum extorquens (strain CM4 / NCIMB 13688)</name>
    <name type="common">Methylobacterium extorquens</name>
    <dbReference type="NCBI Taxonomy" id="440085"/>
    <lineage>
        <taxon>Bacteria</taxon>
        <taxon>Pseudomonadati</taxon>
        <taxon>Pseudomonadota</taxon>
        <taxon>Alphaproteobacteria</taxon>
        <taxon>Hyphomicrobiales</taxon>
        <taxon>Methylobacteriaceae</taxon>
        <taxon>Methylorubrum</taxon>
    </lineage>
</organism>
<evidence type="ECO:0000255" key="1">
    <source>
        <dbReference type="HAMAP-Rule" id="MF_01229"/>
    </source>
</evidence>
<proteinExistence type="inferred from homology"/>
<keyword id="KW-0285">Flavoprotein</keyword>
<keyword id="KW-0288">FMN</keyword>
<keyword id="KW-0503">Monooxygenase</keyword>
<keyword id="KW-0560">Oxidoreductase</keyword>
<dbReference type="EC" id="1.14.14.5" evidence="1"/>
<dbReference type="EMBL" id="CP001298">
    <property type="protein sequence ID" value="ACK84536.1"/>
    <property type="molecule type" value="Genomic_DNA"/>
</dbReference>
<dbReference type="RefSeq" id="WP_003606053.1">
    <property type="nucleotide sequence ID" value="NC_011757.1"/>
</dbReference>
<dbReference type="SMR" id="B7KX11"/>
<dbReference type="KEGG" id="mch:Mchl_3717"/>
<dbReference type="HOGENOM" id="CLU_027853_1_0_5"/>
<dbReference type="Proteomes" id="UP000002385">
    <property type="component" value="Chromosome"/>
</dbReference>
<dbReference type="GO" id="GO:0008726">
    <property type="term" value="F:alkanesulfonate monooxygenase activity"/>
    <property type="evidence" value="ECO:0007669"/>
    <property type="project" value="UniProtKB-UniRule"/>
</dbReference>
<dbReference type="GO" id="GO:0046306">
    <property type="term" value="P:alkanesulfonate catabolic process"/>
    <property type="evidence" value="ECO:0007669"/>
    <property type="project" value="TreeGrafter"/>
</dbReference>
<dbReference type="CDD" id="cd01094">
    <property type="entry name" value="Alkanesulfonate_monoxygenase"/>
    <property type="match status" value="1"/>
</dbReference>
<dbReference type="Gene3D" id="3.20.20.30">
    <property type="entry name" value="Luciferase-like domain"/>
    <property type="match status" value="1"/>
</dbReference>
<dbReference type="HAMAP" id="MF_01229">
    <property type="entry name" value="Alkanesulf_monooxygen"/>
    <property type="match status" value="1"/>
</dbReference>
<dbReference type="InterPro" id="IPR019911">
    <property type="entry name" value="Alkanesulphonate_mOase_FMN-dep"/>
</dbReference>
<dbReference type="InterPro" id="IPR011251">
    <property type="entry name" value="Luciferase-like_dom"/>
</dbReference>
<dbReference type="InterPro" id="IPR036661">
    <property type="entry name" value="Luciferase-like_sf"/>
</dbReference>
<dbReference type="InterPro" id="IPR050172">
    <property type="entry name" value="SsuD_RutA_monooxygenase"/>
</dbReference>
<dbReference type="NCBIfam" id="TIGR03565">
    <property type="entry name" value="alk_sulf_monoox"/>
    <property type="match status" value="1"/>
</dbReference>
<dbReference type="NCBIfam" id="NF001939">
    <property type="entry name" value="PRK00719.1"/>
    <property type="match status" value="1"/>
</dbReference>
<dbReference type="PANTHER" id="PTHR42847">
    <property type="entry name" value="ALKANESULFONATE MONOOXYGENASE"/>
    <property type="match status" value="1"/>
</dbReference>
<dbReference type="PANTHER" id="PTHR42847:SF4">
    <property type="entry name" value="ALKANESULFONATE MONOOXYGENASE-RELATED"/>
    <property type="match status" value="1"/>
</dbReference>
<dbReference type="Pfam" id="PF00296">
    <property type="entry name" value="Bac_luciferase"/>
    <property type="match status" value="1"/>
</dbReference>
<dbReference type="SUPFAM" id="SSF51679">
    <property type="entry name" value="Bacterial luciferase-like"/>
    <property type="match status" value="1"/>
</dbReference>
<reference key="1">
    <citation type="submission" date="2008-12" db="EMBL/GenBank/DDBJ databases">
        <title>Complete sequence of chromosome of Methylobacterium chloromethanicum CM4.</title>
        <authorList>
            <consortium name="US DOE Joint Genome Institute"/>
            <person name="Lucas S."/>
            <person name="Copeland A."/>
            <person name="Lapidus A."/>
            <person name="Glavina del Rio T."/>
            <person name="Dalin E."/>
            <person name="Tice H."/>
            <person name="Bruce D."/>
            <person name="Goodwin L."/>
            <person name="Pitluck S."/>
            <person name="Chertkov O."/>
            <person name="Brettin T."/>
            <person name="Detter J.C."/>
            <person name="Han C."/>
            <person name="Larimer F."/>
            <person name="Land M."/>
            <person name="Hauser L."/>
            <person name="Kyrpides N."/>
            <person name="Mikhailova N."/>
            <person name="Marx C."/>
            <person name="Richardson P."/>
        </authorList>
    </citation>
    <scope>NUCLEOTIDE SEQUENCE [LARGE SCALE GENOMIC DNA]</scope>
    <source>
        <strain>CM4 / NCIMB 13688</strain>
    </source>
</reference>
<protein>
    <recommendedName>
        <fullName evidence="1">Alkanesulfonate monooxygenase</fullName>
        <ecNumber evidence="1">1.14.14.5</ecNumber>
    </recommendedName>
    <alternativeName>
        <fullName evidence="1">FMNH2-dependent aliphatic sulfonate monooxygenase</fullName>
    </alternativeName>
</protein>
<comment type="function">
    <text evidence="1">Catalyzes the desulfonation of aliphatic sulfonates.</text>
</comment>
<comment type="catalytic activity">
    <reaction evidence="1">
        <text>an alkanesulfonate + FMNH2 + O2 = an aldehyde + FMN + sulfite + H2O + 2 H(+)</text>
        <dbReference type="Rhea" id="RHEA:23064"/>
        <dbReference type="ChEBI" id="CHEBI:15377"/>
        <dbReference type="ChEBI" id="CHEBI:15378"/>
        <dbReference type="ChEBI" id="CHEBI:15379"/>
        <dbReference type="ChEBI" id="CHEBI:17359"/>
        <dbReference type="ChEBI" id="CHEBI:17478"/>
        <dbReference type="ChEBI" id="CHEBI:57618"/>
        <dbReference type="ChEBI" id="CHEBI:58210"/>
        <dbReference type="ChEBI" id="CHEBI:134249"/>
        <dbReference type="EC" id="1.14.14.5"/>
    </reaction>
</comment>
<comment type="similarity">
    <text evidence="1">Belongs to the SsuD family.</text>
</comment>
<sequence>MTIQTDGKTDVLWFLPTHGDGRYLGASEGARDVSLPYLRQIAQAADDLGYYGVLLPTGRSCEDSWVVASALAPLTQRLRFLVAVRPGLQEPSMAARMAATLDRISDGRLLINVVTGGDPVELKGDGVFLDHDERYVVTDEFLHIWRGLMAGETVNFEGKHLRSENGRVIFRPVQAPYPPLYFGGSSPAGIEVAAEHCEVYLTWGEPPAGVAEKIAKAREAAERKGKTFSYGIRLHVIVRETESEAWEAADRLISRLDDATIAQAQATLKRQDSVGQSRMMALHGGDRNKLVVSPNLWAGVGLVRGGAGTALVGSADQVADRMKEYIDLGIDRFILSGYPHLEEAYRFAELVFPKLPLRATTGTAPSTARNNGPFGEVIANDIVPTRRVSAH</sequence>